<comment type="function">
    <text evidence="1">Precursor peptide that leads to mycofactocin (MFT) after extensive post-translational modifications by enzymes encoded by adjacent genes. Mycofactocin acts as a redox cofactor of nicotinamide-dependent oxidoreductases encoded in the same locus.</text>
</comment>
<comment type="PTM">
    <text evidence="1">The post-translational modifications that lead to mycofactocin involve oxidative decarboxylation of the C-terminal tyrosine residue catalyzed by MftC, introduction of a tyramine-valine cross-link, removal of the modified C-terminal dipeptide by MftE. The released dipeptide then undergoes oxidative deamination by MftD, glycosylation by MftF and methylation by an unknown enzyme.</text>
</comment>
<comment type="miscellaneous">
    <text evidence="3">Mycofactocin is classified as a ribosomally synthesized and post-translationally modified peptide (RiPP).</text>
</comment>
<comment type="similarity">
    <text evidence="3">Belongs to the mycofactocin precursor peptide family.</text>
</comment>
<comment type="sequence caution" evidence="3">
    <conflict type="erroneous initiation">
        <sequence resource="EMBL-CDS" id="CCP43435"/>
    </conflict>
    <text>Extended N-terminus.</text>
</comment>
<name>MFTA_MYCTU</name>
<feature type="chain" id="PRO_0000415282" description="Mycofactocin precursor peptide">
    <location>
        <begin position="1"/>
        <end position="29"/>
    </location>
</feature>
<feature type="site" description="Cleavage; by MftE" evidence="1">
    <location>
        <begin position="27"/>
        <end position="28"/>
    </location>
</feature>
<organism>
    <name type="scientific">Mycobacterium tuberculosis (strain ATCC 25618 / H37Rv)</name>
    <dbReference type="NCBI Taxonomy" id="83332"/>
    <lineage>
        <taxon>Bacteria</taxon>
        <taxon>Bacillati</taxon>
        <taxon>Actinomycetota</taxon>
        <taxon>Actinomycetes</taxon>
        <taxon>Mycobacteriales</taxon>
        <taxon>Mycobacteriaceae</taxon>
        <taxon>Mycobacterium</taxon>
        <taxon>Mycobacterium tuberculosis complex</taxon>
    </lineage>
</organism>
<reference key="1">
    <citation type="journal article" date="1998" name="Nature">
        <title>Deciphering the biology of Mycobacterium tuberculosis from the complete genome sequence.</title>
        <authorList>
            <person name="Cole S.T."/>
            <person name="Brosch R."/>
            <person name="Parkhill J."/>
            <person name="Garnier T."/>
            <person name="Churcher C.M."/>
            <person name="Harris D.E."/>
            <person name="Gordon S.V."/>
            <person name="Eiglmeier K."/>
            <person name="Gas S."/>
            <person name="Barry C.E. III"/>
            <person name="Tekaia F."/>
            <person name="Badcock K."/>
            <person name="Basham D."/>
            <person name="Brown D."/>
            <person name="Chillingworth T."/>
            <person name="Connor R."/>
            <person name="Davies R.M."/>
            <person name="Devlin K."/>
            <person name="Feltwell T."/>
            <person name="Gentles S."/>
            <person name="Hamlin N."/>
            <person name="Holroyd S."/>
            <person name="Hornsby T."/>
            <person name="Jagels K."/>
            <person name="Krogh A."/>
            <person name="McLean J."/>
            <person name="Moule S."/>
            <person name="Murphy L.D."/>
            <person name="Oliver S."/>
            <person name="Osborne J."/>
            <person name="Quail M.A."/>
            <person name="Rajandream M.A."/>
            <person name="Rogers J."/>
            <person name="Rutter S."/>
            <person name="Seeger K."/>
            <person name="Skelton S."/>
            <person name="Squares S."/>
            <person name="Squares R."/>
            <person name="Sulston J.E."/>
            <person name="Taylor K."/>
            <person name="Whitehead S."/>
            <person name="Barrell B.G."/>
        </authorList>
    </citation>
    <scope>NUCLEOTIDE SEQUENCE [LARGE SCALE GENOMIC DNA]</scope>
    <source>
        <strain>ATCC 25618 / H37Rv</strain>
    </source>
</reference>
<reference key="2">
    <citation type="journal article" date="2011" name="BMC Genomics">
        <title>Bioinformatic evidence for a widely distributed, ribosomally produced electron carrier precursor, its maturation proteins, and its nicotinoprotein redox partners.</title>
        <authorList>
            <person name="Haft D.H."/>
        </authorList>
    </citation>
    <scope>IDENTIFICATION</scope>
    <scope>POSSIBLE FUNCTION</scope>
    <source>
        <strain>ATCC 25618 / H37Rv</strain>
    </source>
</reference>
<dbReference type="EMBL" id="AL123456">
    <property type="protein sequence ID" value="CCP43435.1"/>
    <property type="status" value="ALT_INIT"/>
    <property type="molecule type" value="Genomic_DNA"/>
</dbReference>
<dbReference type="RefSeq" id="WP_003403483.1">
    <property type="nucleotide sequence ID" value="NZ_NVQJ01000007.1"/>
</dbReference>
<dbReference type="RefSeq" id="YP_007409348.1">
    <property type="nucleotide sequence ID" value="NC_000962.3"/>
</dbReference>
<dbReference type="STRING" id="83332.Rv0691A"/>
<dbReference type="PaxDb" id="83332-Rv0691A"/>
<dbReference type="GeneID" id="14515851"/>
<dbReference type="GeneID" id="45428029"/>
<dbReference type="KEGG" id="mtu:Rv0691A"/>
<dbReference type="PATRIC" id="fig|83332.111.peg.767"/>
<dbReference type="TubercuList" id="Rv0691A"/>
<dbReference type="eggNOG" id="ENOG5031WMY">
    <property type="taxonomic scope" value="Bacteria"/>
</dbReference>
<dbReference type="InParanoid" id="P9WJ81"/>
<dbReference type="Proteomes" id="UP000001584">
    <property type="component" value="Chromosome"/>
</dbReference>
<dbReference type="InterPro" id="IPR023988">
    <property type="entry name" value="MftA"/>
</dbReference>
<dbReference type="NCBIfam" id="TIGR03969">
    <property type="entry name" value="mycofactocin"/>
    <property type="match status" value="1"/>
</dbReference>
<dbReference type="Pfam" id="PF23709">
    <property type="entry name" value="MftA"/>
    <property type="match status" value="1"/>
</dbReference>
<gene>
    <name evidence="2" type="primary">mftA</name>
    <name type="ordered locus">Rv0691A</name>
</gene>
<proteinExistence type="inferred from homology"/>
<evidence type="ECO:0000250" key="1">
    <source>
        <dbReference type="UniProtKB" id="P0DUE9"/>
    </source>
</evidence>
<evidence type="ECO:0000303" key="2">
    <source>
    </source>
</evidence>
<evidence type="ECO:0000305" key="3"/>
<protein>
    <recommendedName>
        <fullName evidence="3">Mycofactocin precursor peptide</fullName>
    </recommendedName>
</protein>
<sequence>MDYETDTDTELVTETLVEEVSIDGMCGVY</sequence>
<keyword id="KW-1185">Reference proteome</keyword>
<accession>P9WJ81</accession>
<accession>P0DJC2</accession>
<accession>Q8VKG2</accession>